<evidence type="ECO:0000255" key="1">
    <source>
        <dbReference type="HAMAP-Rule" id="MF_00961"/>
    </source>
</evidence>
<gene>
    <name evidence="1" type="primary">rpoH</name>
</gene>
<feature type="chain" id="PRO_0000093956" description="RNA polymerase sigma factor RpoH">
    <location>
        <begin position="1"/>
        <end position="285"/>
    </location>
</feature>
<feature type="DNA-binding region" description="H-T-H motif" evidence="1">
    <location>
        <begin position="254"/>
        <end position="273"/>
    </location>
</feature>
<feature type="region of interest" description="Sigma-70 factor domain-2" evidence="1">
    <location>
        <begin position="53"/>
        <end position="122"/>
    </location>
</feature>
<feature type="region of interest" description="Sigma-70 factor domain-4" evidence="1">
    <location>
        <begin position="229"/>
        <end position="281"/>
    </location>
</feature>
<feature type="short sequence motif" description="Interaction with polymerase core subunit RpoC">
    <location>
        <begin position="77"/>
        <end position="80"/>
    </location>
</feature>
<sequence length="285" mass="32654">MTKEMQTLALAPVGNLESYIRAANTWPMLTAEEEKELAEKLHYQGDLEAAKTLILSHLRFVVHVARNYAGYGLPQADLIQEGNIGLMKAVRRFNPEVGVRLVSFAVHWIKAEIHEYVLRNWRIVKVATTKAQRKLFFNLRKTKQRLGWFNQDEVEMVARELGVSSKDVREMESRMAAQDMTFDMSADDDASDSQPMAPVLYLQDKTSNFADGIEEDNWEDQAANKLTFAMEGLDERSQDIIRARWLDEDNKSTLQELADRYGVSAERVRQLEKNAMKKLRAAIEA</sequence>
<name>RPOH_ENTCL</name>
<keyword id="KW-0963">Cytoplasm</keyword>
<keyword id="KW-0238">DNA-binding</keyword>
<keyword id="KW-0731">Sigma factor</keyword>
<keyword id="KW-0346">Stress response</keyword>
<keyword id="KW-0804">Transcription</keyword>
<keyword id="KW-0805">Transcription regulation</keyword>
<proteinExistence type="inferred from homology"/>
<organism>
    <name type="scientific">Enterobacter cloacae</name>
    <dbReference type="NCBI Taxonomy" id="550"/>
    <lineage>
        <taxon>Bacteria</taxon>
        <taxon>Pseudomonadati</taxon>
        <taxon>Pseudomonadota</taxon>
        <taxon>Gammaproteobacteria</taxon>
        <taxon>Enterobacterales</taxon>
        <taxon>Enterobacteriaceae</taxon>
        <taxon>Enterobacter</taxon>
        <taxon>Enterobacter cloacae complex</taxon>
    </lineage>
</organism>
<protein>
    <recommendedName>
        <fullName evidence="1">RNA polymerase sigma factor RpoH</fullName>
    </recommendedName>
    <alternativeName>
        <fullName evidence="1">RNA polymerase sigma-32 factor</fullName>
    </alternativeName>
</protein>
<reference key="1">
    <citation type="journal article" date="1995" name="Nucleic Acids Res.">
        <title>Isolation and sequence analysis of rpoH genes encoding sigma 32 homologs from Gram-negative bacteria: conserved mRNA and protein segments for heat shock regulation.</title>
        <authorList>
            <person name="Nakahigashi K."/>
            <person name="Yanagi H."/>
            <person name="Yura T."/>
        </authorList>
    </citation>
    <scope>NUCLEOTIDE SEQUENCE [GENOMIC DNA]</scope>
</reference>
<comment type="function">
    <text evidence="1">Sigma factors are initiation factors that promote the attachment of RNA polymerase to specific initiation sites and are then released. This sigma factor is involved in regulation of expression of heat shock genes.</text>
</comment>
<comment type="subunit">
    <text evidence="1">Interacts with the RNA polymerase core enzyme.</text>
</comment>
<comment type="subcellular location">
    <subcellularLocation>
        <location evidence="1">Cytoplasm</location>
    </subcellularLocation>
</comment>
<comment type="similarity">
    <text evidence="1">Belongs to the sigma-70 factor family. RpoH subfamily.</text>
</comment>
<dbReference type="EMBL" id="D50829">
    <property type="protein sequence ID" value="BAA09440.1"/>
    <property type="molecule type" value="Genomic_DNA"/>
</dbReference>
<dbReference type="PIR" id="S60165">
    <property type="entry name" value="S60165"/>
</dbReference>
<dbReference type="RefSeq" id="WP_000159624.1">
    <property type="nucleotide sequence ID" value="NZ_PEHU01000017.1"/>
</dbReference>
<dbReference type="SMR" id="P50508"/>
<dbReference type="GeneID" id="92385622"/>
<dbReference type="eggNOG" id="COG0568">
    <property type="taxonomic scope" value="Bacteria"/>
</dbReference>
<dbReference type="GO" id="GO:0005737">
    <property type="term" value="C:cytoplasm"/>
    <property type="evidence" value="ECO:0007669"/>
    <property type="project" value="UniProtKB-SubCell"/>
</dbReference>
<dbReference type="GO" id="GO:0003677">
    <property type="term" value="F:DNA binding"/>
    <property type="evidence" value="ECO:0007669"/>
    <property type="project" value="UniProtKB-UniRule"/>
</dbReference>
<dbReference type="GO" id="GO:0016987">
    <property type="term" value="F:sigma factor activity"/>
    <property type="evidence" value="ECO:0007669"/>
    <property type="project" value="UniProtKB-UniRule"/>
</dbReference>
<dbReference type="GO" id="GO:0006352">
    <property type="term" value="P:DNA-templated transcription initiation"/>
    <property type="evidence" value="ECO:0007669"/>
    <property type="project" value="UniProtKB-UniRule"/>
</dbReference>
<dbReference type="GO" id="GO:0009408">
    <property type="term" value="P:response to heat"/>
    <property type="evidence" value="ECO:0007669"/>
    <property type="project" value="UniProtKB-UniRule"/>
</dbReference>
<dbReference type="CDD" id="cd06171">
    <property type="entry name" value="Sigma70_r4"/>
    <property type="match status" value="1"/>
</dbReference>
<dbReference type="FunFam" id="1.10.10.10:FF:000285">
    <property type="entry name" value="RNA polymerase sigma factor RpoH"/>
    <property type="match status" value="1"/>
</dbReference>
<dbReference type="FunFam" id="1.20.120.1810:FF:000001">
    <property type="entry name" value="RNA polymerase sigma factor RpoH"/>
    <property type="match status" value="1"/>
</dbReference>
<dbReference type="FunFam" id="1.20.140.160:FF:000002">
    <property type="entry name" value="RNA polymerase sigma factor RpoH"/>
    <property type="match status" value="1"/>
</dbReference>
<dbReference type="Gene3D" id="1.20.120.1810">
    <property type="match status" value="1"/>
</dbReference>
<dbReference type="Gene3D" id="1.20.140.160">
    <property type="match status" value="1"/>
</dbReference>
<dbReference type="HAMAP" id="MF_00961">
    <property type="entry name" value="Sigma70_RpoH"/>
    <property type="match status" value="1"/>
</dbReference>
<dbReference type="InterPro" id="IPR014284">
    <property type="entry name" value="RNA_pol_sigma-70_dom"/>
</dbReference>
<dbReference type="InterPro" id="IPR000943">
    <property type="entry name" value="RNA_pol_sigma70"/>
</dbReference>
<dbReference type="InterPro" id="IPR009042">
    <property type="entry name" value="RNA_pol_sigma70_r1_2"/>
</dbReference>
<dbReference type="InterPro" id="IPR007627">
    <property type="entry name" value="RNA_pol_sigma70_r2"/>
</dbReference>
<dbReference type="InterPro" id="IPR007630">
    <property type="entry name" value="RNA_pol_sigma70_r4"/>
</dbReference>
<dbReference type="InterPro" id="IPR013325">
    <property type="entry name" value="RNA_pol_sigma_r2"/>
</dbReference>
<dbReference type="InterPro" id="IPR013324">
    <property type="entry name" value="RNA_pol_sigma_r3/r4-like"/>
</dbReference>
<dbReference type="InterPro" id="IPR012759">
    <property type="entry name" value="RNA_pol_sigma_RpoH_proteobac"/>
</dbReference>
<dbReference type="InterPro" id="IPR050813">
    <property type="entry name" value="Sigma-70_Factor"/>
</dbReference>
<dbReference type="NCBIfam" id="NF005143">
    <property type="entry name" value="PRK06596.1"/>
    <property type="match status" value="1"/>
</dbReference>
<dbReference type="NCBIfam" id="TIGR02392">
    <property type="entry name" value="rpoH_proteo"/>
    <property type="match status" value="1"/>
</dbReference>
<dbReference type="NCBIfam" id="TIGR02937">
    <property type="entry name" value="sigma70-ECF"/>
    <property type="match status" value="1"/>
</dbReference>
<dbReference type="PANTHER" id="PTHR30376:SF3">
    <property type="entry name" value="RNA POLYMERASE SIGMA FACTOR RPOH"/>
    <property type="match status" value="1"/>
</dbReference>
<dbReference type="PANTHER" id="PTHR30376">
    <property type="entry name" value="SIGMA FACTOR RPOH HEAT SHOCK RELATED"/>
    <property type="match status" value="1"/>
</dbReference>
<dbReference type="Pfam" id="PF00140">
    <property type="entry name" value="Sigma70_r1_2"/>
    <property type="match status" value="1"/>
</dbReference>
<dbReference type="Pfam" id="PF04542">
    <property type="entry name" value="Sigma70_r2"/>
    <property type="match status" value="1"/>
</dbReference>
<dbReference type="Pfam" id="PF04545">
    <property type="entry name" value="Sigma70_r4"/>
    <property type="match status" value="1"/>
</dbReference>
<dbReference type="PIRSF" id="PIRSF000770">
    <property type="entry name" value="RNA_pol_sigma-SigE/K"/>
    <property type="match status" value="1"/>
</dbReference>
<dbReference type="PRINTS" id="PR00046">
    <property type="entry name" value="SIGMA70FCT"/>
</dbReference>
<dbReference type="SUPFAM" id="SSF88946">
    <property type="entry name" value="Sigma2 domain of RNA polymerase sigma factors"/>
    <property type="match status" value="1"/>
</dbReference>
<dbReference type="SUPFAM" id="SSF88659">
    <property type="entry name" value="Sigma3 and sigma4 domains of RNA polymerase sigma factors"/>
    <property type="match status" value="1"/>
</dbReference>
<dbReference type="PROSITE" id="PS00715">
    <property type="entry name" value="SIGMA70_1"/>
    <property type="match status" value="1"/>
</dbReference>
<dbReference type="PROSITE" id="PS00716">
    <property type="entry name" value="SIGMA70_2"/>
    <property type="match status" value="1"/>
</dbReference>
<accession>P50508</accession>